<gene>
    <name evidence="1" type="primary">hslU</name>
    <name type="ordered locus">SFV_4002</name>
</gene>
<keyword id="KW-0067">ATP-binding</keyword>
<keyword id="KW-0143">Chaperone</keyword>
<keyword id="KW-0963">Cytoplasm</keyword>
<keyword id="KW-0547">Nucleotide-binding</keyword>
<keyword id="KW-0346">Stress response</keyword>
<protein>
    <recommendedName>
        <fullName evidence="1">ATP-dependent protease ATPase subunit HslU</fullName>
    </recommendedName>
    <alternativeName>
        <fullName evidence="1">Heat shock protein HslU</fullName>
    </alternativeName>
    <alternativeName>
        <fullName evidence="1">Unfoldase HslU</fullName>
    </alternativeName>
</protein>
<feature type="chain" id="PRO_1000012812" description="ATP-dependent protease ATPase subunit HslU">
    <location>
        <begin position="1"/>
        <end position="443"/>
    </location>
</feature>
<feature type="binding site" evidence="1">
    <location>
        <position position="18"/>
    </location>
    <ligand>
        <name>ATP</name>
        <dbReference type="ChEBI" id="CHEBI:30616"/>
    </ligand>
</feature>
<feature type="binding site" evidence="1">
    <location>
        <begin position="60"/>
        <end position="65"/>
    </location>
    <ligand>
        <name>ATP</name>
        <dbReference type="ChEBI" id="CHEBI:30616"/>
    </ligand>
</feature>
<feature type="binding site" evidence="1">
    <location>
        <position position="256"/>
    </location>
    <ligand>
        <name>ATP</name>
        <dbReference type="ChEBI" id="CHEBI:30616"/>
    </ligand>
</feature>
<feature type="binding site" evidence="1">
    <location>
        <position position="321"/>
    </location>
    <ligand>
        <name>ATP</name>
        <dbReference type="ChEBI" id="CHEBI:30616"/>
    </ligand>
</feature>
<feature type="binding site" evidence="1">
    <location>
        <position position="393"/>
    </location>
    <ligand>
        <name>ATP</name>
        <dbReference type="ChEBI" id="CHEBI:30616"/>
    </ligand>
</feature>
<evidence type="ECO:0000255" key="1">
    <source>
        <dbReference type="HAMAP-Rule" id="MF_00249"/>
    </source>
</evidence>
<proteinExistence type="inferred from homology"/>
<name>HSLU_SHIF8</name>
<dbReference type="EMBL" id="CP000266">
    <property type="protein sequence ID" value="ABF06007.1"/>
    <property type="molecule type" value="Genomic_DNA"/>
</dbReference>
<dbReference type="RefSeq" id="WP_001293341.1">
    <property type="nucleotide sequence ID" value="NC_008258.1"/>
</dbReference>
<dbReference type="SMR" id="Q0SY58"/>
<dbReference type="GeneID" id="93777967"/>
<dbReference type="KEGG" id="sfv:SFV_4002"/>
<dbReference type="HOGENOM" id="CLU_033123_0_0_6"/>
<dbReference type="Proteomes" id="UP000000659">
    <property type="component" value="Chromosome"/>
</dbReference>
<dbReference type="GO" id="GO:0009376">
    <property type="term" value="C:HslUV protease complex"/>
    <property type="evidence" value="ECO:0007669"/>
    <property type="project" value="UniProtKB-UniRule"/>
</dbReference>
<dbReference type="GO" id="GO:0005524">
    <property type="term" value="F:ATP binding"/>
    <property type="evidence" value="ECO:0007669"/>
    <property type="project" value="UniProtKB-UniRule"/>
</dbReference>
<dbReference type="GO" id="GO:0016887">
    <property type="term" value="F:ATP hydrolysis activity"/>
    <property type="evidence" value="ECO:0007669"/>
    <property type="project" value="InterPro"/>
</dbReference>
<dbReference type="GO" id="GO:0008233">
    <property type="term" value="F:peptidase activity"/>
    <property type="evidence" value="ECO:0007669"/>
    <property type="project" value="InterPro"/>
</dbReference>
<dbReference type="GO" id="GO:0036402">
    <property type="term" value="F:proteasome-activating activity"/>
    <property type="evidence" value="ECO:0007669"/>
    <property type="project" value="UniProtKB-UniRule"/>
</dbReference>
<dbReference type="GO" id="GO:0043335">
    <property type="term" value="P:protein unfolding"/>
    <property type="evidence" value="ECO:0007669"/>
    <property type="project" value="UniProtKB-UniRule"/>
</dbReference>
<dbReference type="GO" id="GO:0051603">
    <property type="term" value="P:proteolysis involved in protein catabolic process"/>
    <property type="evidence" value="ECO:0007669"/>
    <property type="project" value="TreeGrafter"/>
</dbReference>
<dbReference type="CDD" id="cd19498">
    <property type="entry name" value="RecA-like_HslU"/>
    <property type="match status" value="1"/>
</dbReference>
<dbReference type="FunFam" id="1.10.8.10:FF:000012">
    <property type="entry name" value="ATP-dependent protease ATPase subunit HslU"/>
    <property type="match status" value="1"/>
</dbReference>
<dbReference type="FunFam" id="1.10.8.10:FF:000028">
    <property type="entry name" value="ATP-dependent protease ATPase subunit HslU"/>
    <property type="match status" value="1"/>
</dbReference>
<dbReference type="FunFam" id="1.10.8.60:FF:000027">
    <property type="entry name" value="ATP-dependent protease ATPase subunit HslU"/>
    <property type="match status" value="1"/>
</dbReference>
<dbReference type="FunFam" id="3.40.50.300:FF:000213">
    <property type="entry name" value="ATP-dependent protease ATPase subunit HslU"/>
    <property type="match status" value="1"/>
</dbReference>
<dbReference type="FunFam" id="3.40.50.300:FF:000220">
    <property type="entry name" value="ATP-dependent protease ATPase subunit HslU"/>
    <property type="match status" value="1"/>
</dbReference>
<dbReference type="Gene3D" id="1.10.8.60">
    <property type="match status" value="1"/>
</dbReference>
<dbReference type="Gene3D" id="1.10.8.10">
    <property type="entry name" value="DNA helicase RuvA subunit, C-terminal domain"/>
    <property type="match status" value="2"/>
</dbReference>
<dbReference type="Gene3D" id="3.40.50.300">
    <property type="entry name" value="P-loop containing nucleotide triphosphate hydrolases"/>
    <property type="match status" value="1"/>
</dbReference>
<dbReference type="HAMAP" id="MF_00249">
    <property type="entry name" value="HslU"/>
    <property type="match status" value="1"/>
</dbReference>
<dbReference type="InterPro" id="IPR003593">
    <property type="entry name" value="AAA+_ATPase"/>
</dbReference>
<dbReference type="InterPro" id="IPR050052">
    <property type="entry name" value="ATP-dep_Clp_protease_ClpX"/>
</dbReference>
<dbReference type="InterPro" id="IPR003959">
    <property type="entry name" value="ATPase_AAA_core"/>
</dbReference>
<dbReference type="InterPro" id="IPR019489">
    <property type="entry name" value="Clp_ATPase_C"/>
</dbReference>
<dbReference type="InterPro" id="IPR004491">
    <property type="entry name" value="HslU"/>
</dbReference>
<dbReference type="InterPro" id="IPR027417">
    <property type="entry name" value="P-loop_NTPase"/>
</dbReference>
<dbReference type="NCBIfam" id="TIGR00390">
    <property type="entry name" value="hslU"/>
    <property type="match status" value="1"/>
</dbReference>
<dbReference type="NCBIfam" id="NF003544">
    <property type="entry name" value="PRK05201.1"/>
    <property type="match status" value="1"/>
</dbReference>
<dbReference type="PANTHER" id="PTHR48102">
    <property type="entry name" value="ATP-DEPENDENT CLP PROTEASE ATP-BINDING SUBUNIT CLPX-LIKE, MITOCHONDRIAL-RELATED"/>
    <property type="match status" value="1"/>
</dbReference>
<dbReference type="PANTHER" id="PTHR48102:SF3">
    <property type="entry name" value="ATP-DEPENDENT PROTEASE ATPASE SUBUNIT HSLU"/>
    <property type="match status" value="1"/>
</dbReference>
<dbReference type="Pfam" id="PF00004">
    <property type="entry name" value="AAA"/>
    <property type="match status" value="1"/>
</dbReference>
<dbReference type="Pfam" id="PF07724">
    <property type="entry name" value="AAA_2"/>
    <property type="match status" value="1"/>
</dbReference>
<dbReference type="SMART" id="SM00382">
    <property type="entry name" value="AAA"/>
    <property type="match status" value="1"/>
</dbReference>
<dbReference type="SMART" id="SM01086">
    <property type="entry name" value="ClpB_D2-small"/>
    <property type="match status" value="1"/>
</dbReference>
<dbReference type="SUPFAM" id="SSF52540">
    <property type="entry name" value="P-loop containing nucleoside triphosphate hydrolases"/>
    <property type="match status" value="1"/>
</dbReference>
<accession>Q0SY58</accession>
<sequence>MSEMTPREIVSELDKHIIGQDNAKRSVAIALRNRWRRMQLNEELRHEVTPKNILMIGPTGVGKTEIARRLAKLANAPFIKVEATKFTEVGYVGKEVDSIIRDLTDAAVKMVRVQAIEKNRYRAEELAEERILDVLIPPAKNNWGQTEQQQEPSAARQAFRKKLREGQLDDKEIEIDLAAAPMGVEIMAPPGMEEMTSQLQSMFQNLGGQKQKARKLKIKDAMKLLIEEEAAKLVNPEELKQDAIDAVEQHGIVFIDEIDKICKRGESSGPDVSREGVQRDLLPLVEGCTVSTKHGMVKTDHILFIASGAFQIAKPSDLIPELQGRLPIRVELQALTTSDFERILTEPNASITVQYKALMATEGVNIEFTDSGIKRIAEAAWQVNESTENIGARRLHTVLERLMEEISYDASDLSGQNITIDADYVSKHLDALVADEDLSRFIL</sequence>
<organism>
    <name type="scientific">Shigella flexneri serotype 5b (strain 8401)</name>
    <dbReference type="NCBI Taxonomy" id="373384"/>
    <lineage>
        <taxon>Bacteria</taxon>
        <taxon>Pseudomonadati</taxon>
        <taxon>Pseudomonadota</taxon>
        <taxon>Gammaproteobacteria</taxon>
        <taxon>Enterobacterales</taxon>
        <taxon>Enterobacteriaceae</taxon>
        <taxon>Shigella</taxon>
    </lineage>
</organism>
<comment type="function">
    <text evidence="1">ATPase subunit of a proteasome-like degradation complex; this subunit has chaperone activity. The binding of ATP and its subsequent hydrolysis by HslU are essential for unfolding of protein substrates subsequently hydrolyzed by HslV. HslU recognizes the N-terminal part of its protein substrates and unfolds these before they are guided to HslV for hydrolysis.</text>
</comment>
<comment type="subunit">
    <text evidence="1">A double ring-shaped homohexamer of HslV is capped on each side by a ring-shaped HslU homohexamer. The assembly of the HslU/HslV complex is dependent on binding of ATP.</text>
</comment>
<comment type="subcellular location">
    <subcellularLocation>
        <location evidence="1">Cytoplasm</location>
    </subcellularLocation>
</comment>
<comment type="induction">
    <text evidence="1">By heat shock.</text>
</comment>
<comment type="similarity">
    <text evidence="1">Belongs to the ClpX chaperone family. HslU subfamily.</text>
</comment>
<reference key="1">
    <citation type="journal article" date="2006" name="BMC Genomics">
        <title>Complete genome sequence of Shigella flexneri 5b and comparison with Shigella flexneri 2a.</title>
        <authorList>
            <person name="Nie H."/>
            <person name="Yang F."/>
            <person name="Zhang X."/>
            <person name="Yang J."/>
            <person name="Chen L."/>
            <person name="Wang J."/>
            <person name="Xiong Z."/>
            <person name="Peng J."/>
            <person name="Sun L."/>
            <person name="Dong J."/>
            <person name="Xue Y."/>
            <person name="Xu X."/>
            <person name="Chen S."/>
            <person name="Yao Z."/>
            <person name="Shen Y."/>
            <person name="Jin Q."/>
        </authorList>
    </citation>
    <scope>NUCLEOTIDE SEQUENCE [LARGE SCALE GENOMIC DNA]</scope>
    <source>
        <strain>8401</strain>
    </source>
</reference>